<feature type="chain" id="PRO_1000022830" description="2-C-methyl-D-erythritol 2,4-cyclodiphosphate synthase">
    <location>
        <begin position="1"/>
        <end position="160"/>
    </location>
</feature>
<feature type="binding site" evidence="1">
    <location>
        <begin position="14"/>
        <end position="16"/>
    </location>
    <ligand>
        <name>4-CDP-2-C-methyl-D-erythritol 2-phosphate</name>
        <dbReference type="ChEBI" id="CHEBI:57919"/>
    </ligand>
</feature>
<feature type="binding site" evidence="1">
    <location>
        <position position="14"/>
    </location>
    <ligand>
        <name>a divalent metal cation</name>
        <dbReference type="ChEBI" id="CHEBI:60240"/>
    </ligand>
</feature>
<feature type="binding site" evidence="1">
    <location>
        <position position="16"/>
    </location>
    <ligand>
        <name>a divalent metal cation</name>
        <dbReference type="ChEBI" id="CHEBI:60240"/>
    </ligand>
</feature>
<feature type="binding site" evidence="1">
    <location>
        <begin position="40"/>
        <end position="41"/>
    </location>
    <ligand>
        <name>4-CDP-2-C-methyl-D-erythritol 2-phosphate</name>
        <dbReference type="ChEBI" id="CHEBI:57919"/>
    </ligand>
</feature>
<feature type="binding site" evidence="1">
    <location>
        <position position="48"/>
    </location>
    <ligand>
        <name>a divalent metal cation</name>
        <dbReference type="ChEBI" id="CHEBI:60240"/>
    </ligand>
</feature>
<feature type="binding site" evidence="1">
    <location>
        <begin position="62"/>
        <end position="64"/>
    </location>
    <ligand>
        <name>4-CDP-2-C-methyl-D-erythritol 2-phosphate</name>
        <dbReference type="ChEBI" id="CHEBI:57919"/>
    </ligand>
</feature>
<feature type="binding site" evidence="1">
    <location>
        <begin position="135"/>
        <end position="138"/>
    </location>
    <ligand>
        <name>4-CDP-2-C-methyl-D-erythritol 2-phosphate</name>
        <dbReference type="ChEBI" id="CHEBI:57919"/>
    </ligand>
</feature>
<feature type="binding site" evidence="1">
    <location>
        <position position="142"/>
    </location>
    <ligand>
        <name>4-CDP-2-C-methyl-D-erythritol 2-phosphate</name>
        <dbReference type="ChEBI" id="CHEBI:57919"/>
    </ligand>
</feature>
<feature type="binding site" evidence="1">
    <location>
        <position position="145"/>
    </location>
    <ligand>
        <name>4-CDP-2-C-methyl-D-erythritol 2-phosphate</name>
        <dbReference type="ChEBI" id="CHEBI:57919"/>
    </ligand>
</feature>
<feature type="site" description="Transition state stabilizer" evidence="1">
    <location>
        <position position="40"/>
    </location>
</feature>
<feature type="site" description="Transition state stabilizer" evidence="1">
    <location>
        <position position="136"/>
    </location>
</feature>
<gene>
    <name evidence="1" type="primary">ispF</name>
    <name type="ordered locus">cgR_2563</name>
</gene>
<name>ISPF_CORGB</name>
<keyword id="KW-0414">Isoprene biosynthesis</keyword>
<keyword id="KW-0456">Lyase</keyword>
<keyword id="KW-0479">Metal-binding</keyword>
<organism>
    <name type="scientific">Corynebacterium glutamicum (strain R)</name>
    <dbReference type="NCBI Taxonomy" id="340322"/>
    <lineage>
        <taxon>Bacteria</taxon>
        <taxon>Bacillati</taxon>
        <taxon>Actinomycetota</taxon>
        <taxon>Actinomycetes</taxon>
        <taxon>Mycobacteriales</taxon>
        <taxon>Corynebacteriaceae</taxon>
        <taxon>Corynebacterium</taxon>
    </lineage>
</organism>
<dbReference type="EC" id="4.6.1.12" evidence="1"/>
<dbReference type="EMBL" id="AP009044">
    <property type="protein sequence ID" value="BAF55575.1"/>
    <property type="molecule type" value="Genomic_DNA"/>
</dbReference>
<dbReference type="RefSeq" id="WP_011897886.1">
    <property type="nucleotide sequence ID" value="NC_009342.1"/>
</dbReference>
<dbReference type="SMR" id="A4QH59"/>
<dbReference type="KEGG" id="cgt:cgR_2563"/>
<dbReference type="HOGENOM" id="CLU_084630_1_0_11"/>
<dbReference type="PhylomeDB" id="A4QH59"/>
<dbReference type="UniPathway" id="UPA00056">
    <property type="reaction ID" value="UER00095"/>
</dbReference>
<dbReference type="Proteomes" id="UP000006698">
    <property type="component" value="Chromosome"/>
</dbReference>
<dbReference type="GO" id="GO:0008685">
    <property type="term" value="F:2-C-methyl-D-erythritol 2,4-cyclodiphosphate synthase activity"/>
    <property type="evidence" value="ECO:0007669"/>
    <property type="project" value="UniProtKB-UniRule"/>
</dbReference>
<dbReference type="GO" id="GO:0046872">
    <property type="term" value="F:metal ion binding"/>
    <property type="evidence" value="ECO:0007669"/>
    <property type="project" value="UniProtKB-KW"/>
</dbReference>
<dbReference type="GO" id="GO:0019288">
    <property type="term" value="P:isopentenyl diphosphate biosynthetic process, methylerythritol 4-phosphate pathway"/>
    <property type="evidence" value="ECO:0007669"/>
    <property type="project" value="UniProtKB-UniRule"/>
</dbReference>
<dbReference type="GO" id="GO:0016114">
    <property type="term" value="P:terpenoid biosynthetic process"/>
    <property type="evidence" value="ECO:0007669"/>
    <property type="project" value="InterPro"/>
</dbReference>
<dbReference type="CDD" id="cd00554">
    <property type="entry name" value="MECDP_synthase"/>
    <property type="match status" value="1"/>
</dbReference>
<dbReference type="FunFam" id="3.30.1330.50:FF:000003">
    <property type="entry name" value="2-C-methyl-D-erythritol 2,4-cyclodiphosphate synthase"/>
    <property type="match status" value="1"/>
</dbReference>
<dbReference type="Gene3D" id="3.30.1330.50">
    <property type="entry name" value="2-C-methyl-D-erythritol 2,4-cyclodiphosphate synthase"/>
    <property type="match status" value="1"/>
</dbReference>
<dbReference type="HAMAP" id="MF_00107">
    <property type="entry name" value="IspF"/>
    <property type="match status" value="1"/>
</dbReference>
<dbReference type="InterPro" id="IPR003526">
    <property type="entry name" value="MECDP_synthase"/>
</dbReference>
<dbReference type="InterPro" id="IPR020555">
    <property type="entry name" value="MECDP_synthase_CS"/>
</dbReference>
<dbReference type="InterPro" id="IPR036571">
    <property type="entry name" value="MECDP_synthase_sf"/>
</dbReference>
<dbReference type="NCBIfam" id="TIGR00151">
    <property type="entry name" value="ispF"/>
    <property type="match status" value="1"/>
</dbReference>
<dbReference type="PANTHER" id="PTHR43181">
    <property type="entry name" value="2-C-METHYL-D-ERYTHRITOL 2,4-CYCLODIPHOSPHATE SYNTHASE, CHLOROPLASTIC"/>
    <property type="match status" value="1"/>
</dbReference>
<dbReference type="PANTHER" id="PTHR43181:SF1">
    <property type="entry name" value="2-C-METHYL-D-ERYTHRITOL 2,4-CYCLODIPHOSPHATE SYNTHASE, CHLOROPLASTIC"/>
    <property type="match status" value="1"/>
</dbReference>
<dbReference type="Pfam" id="PF02542">
    <property type="entry name" value="YgbB"/>
    <property type="match status" value="1"/>
</dbReference>
<dbReference type="SUPFAM" id="SSF69765">
    <property type="entry name" value="IpsF-like"/>
    <property type="match status" value="1"/>
</dbReference>
<dbReference type="PROSITE" id="PS01350">
    <property type="entry name" value="ISPF"/>
    <property type="match status" value="1"/>
</dbReference>
<sequence length="160" mass="16671">MTNPIIPRVGIATDAHQIEAGKPCWIACLLFEGVDGCEGHSDGDVIAHAIVDALLSASGLGDLGSFVGVGRPEYDGVSGTQLLKEVRELLESRGFVIGNVAAQLVGQTPKFGPRREEAQQVISDIIGAPCSLSATTTDHMGFTGRSEGRASVATAVVWKV</sequence>
<reference key="1">
    <citation type="journal article" date="2007" name="Microbiology">
        <title>Comparative analysis of the Corynebacterium glutamicum group and complete genome sequence of strain R.</title>
        <authorList>
            <person name="Yukawa H."/>
            <person name="Omumasaba C.A."/>
            <person name="Nonaka H."/>
            <person name="Kos P."/>
            <person name="Okai N."/>
            <person name="Suzuki N."/>
            <person name="Suda M."/>
            <person name="Tsuge Y."/>
            <person name="Watanabe J."/>
            <person name="Ikeda Y."/>
            <person name="Vertes A.A."/>
            <person name="Inui M."/>
        </authorList>
    </citation>
    <scope>NUCLEOTIDE SEQUENCE [LARGE SCALE GENOMIC DNA]</scope>
    <source>
        <strain>R</strain>
    </source>
</reference>
<comment type="function">
    <text evidence="1">Involved in the biosynthesis of isopentenyl diphosphate (IPP) and dimethylallyl diphosphate (DMAPP), two major building blocks of isoprenoid compounds. Catalyzes the conversion of 4-diphosphocytidyl-2-C-methyl-D-erythritol 2-phosphate (CDP-ME2P) to 2-C-methyl-D-erythritol 2,4-cyclodiphosphate (ME-CPP) with a corresponding release of cytidine 5-monophosphate (CMP).</text>
</comment>
<comment type="catalytic activity">
    <reaction evidence="1">
        <text>4-CDP-2-C-methyl-D-erythritol 2-phosphate = 2-C-methyl-D-erythritol 2,4-cyclic diphosphate + CMP</text>
        <dbReference type="Rhea" id="RHEA:23864"/>
        <dbReference type="ChEBI" id="CHEBI:57919"/>
        <dbReference type="ChEBI" id="CHEBI:58483"/>
        <dbReference type="ChEBI" id="CHEBI:60377"/>
        <dbReference type="EC" id="4.6.1.12"/>
    </reaction>
</comment>
<comment type="cofactor">
    <cofactor evidence="1">
        <name>a divalent metal cation</name>
        <dbReference type="ChEBI" id="CHEBI:60240"/>
    </cofactor>
    <text evidence="1">Binds 1 divalent metal cation per subunit.</text>
</comment>
<comment type="pathway">
    <text evidence="1">Isoprenoid biosynthesis; isopentenyl diphosphate biosynthesis via DXP pathway; isopentenyl diphosphate from 1-deoxy-D-xylulose 5-phosphate: step 4/6.</text>
</comment>
<comment type="subunit">
    <text evidence="1">Homotrimer.</text>
</comment>
<comment type="similarity">
    <text evidence="1">Belongs to the IspF family.</text>
</comment>
<protein>
    <recommendedName>
        <fullName evidence="1">2-C-methyl-D-erythritol 2,4-cyclodiphosphate synthase</fullName>
        <shortName evidence="1">MECDP-synthase</shortName>
        <shortName evidence="1">MECPP-synthase</shortName>
        <shortName evidence="1">MECPS</shortName>
        <ecNumber evidence="1">4.6.1.12</ecNumber>
    </recommendedName>
</protein>
<accession>A4QH59</accession>
<evidence type="ECO:0000255" key="1">
    <source>
        <dbReference type="HAMAP-Rule" id="MF_00107"/>
    </source>
</evidence>
<proteinExistence type="inferred from homology"/>